<evidence type="ECO:0000255" key="1">
    <source>
        <dbReference type="HAMAP-Rule" id="MF_00270"/>
    </source>
</evidence>
<evidence type="ECO:0000256" key="2">
    <source>
        <dbReference type="SAM" id="MobiDB-lite"/>
    </source>
</evidence>
<evidence type="ECO:0000305" key="3"/>
<proteinExistence type="inferred from homology"/>
<accession>Q8EWT5</accession>
<organism>
    <name type="scientific">Malacoplasma penetrans (strain HF-2)</name>
    <name type="common">Mycoplasma penetrans</name>
    <dbReference type="NCBI Taxonomy" id="272633"/>
    <lineage>
        <taxon>Bacteria</taxon>
        <taxon>Bacillati</taxon>
        <taxon>Mycoplasmatota</taxon>
        <taxon>Mycoplasmoidales</taxon>
        <taxon>Mycoplasmoidaceae</taxon>
        <taxon>Malacoplasma</taxon>
    </lineage>
</organism>
<sequence length="154" mass="17551">MEKKTTKKATASKTTTTKKAAAEKTEIKETKKTTTTKTSTAKKATTASVEKTEVKETKKSSDNKKEFNPQDRPFAKYNRGYPNKQGRRKKFCKLCAKGQEHVDYKDVELLYKYLTPNLKIASRKITFACSKHQTRVSNAIKRARIVALIPFVRD</sequence>
<protein>
    <recommendedName>
        <fullName evidence="1">Small ribosomal subunit protein bS18</fullName>
    </recommendedName>
    <alternativeName>
        <fullName evidence="3">30S ribosomal protein S18</fullName>
    </alternativeName>
</protein>
<comment type="function">
    <text evidence="1">Binds as a heterodimer with protein bS6 to the central domain of the 16S rRNA, where it helps stabilize the platform of the 30S subunit.</text>
</comment>
<comment type="subunit">
    <text evidence="1">Part of the 30S ribosomal subunit. Forms a tight heterodimer with protein bS6.</text>
</comment>
<comment type="similarity">
    <text evidence="1">Belongs to the bacterial ribosomal protein bS18 family.</text>
</comment>
<keyword id="KW-1185">Reference proteome</keyword>
<keyword id="KW-0687">Ribonucleoprotein</keyword>
<keyword id="KW-0689">Ribosomal protein</keyword>
<keyword id="KW-0694">RNA-binding</keyword>
<keyword id="KW-0699">rRNA-binding</keyword>
<gene>
    <name evidence="1" type="primary">rpsR</name>
    <name type="ordered locus">MYPE1160</name>
</gene>
<dbReference type="EMBL" id="BA000026">
    <property type="protein sequence ID" value="BAC43908.1"/>
    <property type="molecule type" value="Genomic_DNA"/>
</dbReference>
<dbReference type="SMR" id="Q8EWT5"/>
<dbReference type="STRING" id="272633.gene:10731209"/>
<dbReference type="KEGG" id="mpe:MYPE1160"/>
<dbReference type="eggNOG" id="COG0238">
    <property type="taxonomic scope" value="Bacteria"/>
</dbReference>
<dbReference type="HOGENOM" id="CLU_1702321_0_0_14"/>
<dbReference type="InParanoid" id="Q8EWT5"/>
<dbReference type="Proteomes" id="UP000002522">
    <property type="component" value="Chromosome"/>
</dbReference>
<dbReference type="GO" id="GO:0022627">
    <property type="term" value="C:cytosolic small ribosomal subunit"/>
    <property type="evidence" value="ECO:0007669"/>
    <property type="project" value="TreeGrafter"/>
</dbReference>
<dbReference type="GO" id="GO:0070181">
    <property type="term" value="F:small ribosomal subunit rRNA binding"/>
    <property type="evidence" value="ECO:0007669"/>
    <property type="project" value="TreeGrafter"/>
</dbReference>
<dbReference type="GO" id="GO:0003735">
    <property type="term" value="F:structural constituent of ribosome"/>
    <property type="evidence" value="ECO:0007669"/>
    <property type="project" value="InterPro"/>
</dbReference>
<dbReference type="GO" id="GO:0006412">
    <property type="term" value="P:translation"/>
    <property type="evidence" value="ECO:0007669"/>
    <property type="project" value="UniProtKB-UniRule"/>
</dbReference>
<dbReference type="Gene3D" id="4.10.640.10">
    <property type="entry name" value="Ribosomal protein S18"/>
    <property type="match status" value="1"/>
</dbReference>
<dbReference type="HAMAP" id="MF_00270">
    <property type="entry name" value="Ribosomal_bS18"/>
    <property type="match status" value="1"/>
</dbReference>
<dbReference type="InterPro" id="IPR001648">
    <property type="entry name" value="Ribosomal_bS18"/>
</dbReference>
<dbReference type="InterPro" id="IPR036870">
    <property type="entry name" value="Ribosomal_bS18_sf"/>
</dbReference>
<dbReference type="NCBIfam" id="TIGR00165">
    <property type="entry name" value="S18"/>
    <property type="match status" value="1"/>
</dbReference>
<dbReference type="PANTHER" id="PTHR13479">
    <property type="entry name" value="30S RIBOSOMAL PROTEIN S18"/>
    <property type="match status" value="1"/>
</dbReference>
<dbReference type="PANTHER" id="PTHR13479:SF40">
    <property type="entry name" value="SMALL RIBOSOMAL SUBUNIT PROTEIN BS18M"/>
    <property type="match status" value="1"/>
</dbReference>
<dbReference type="Pfam" id="PF01084">
    <property type="entry name" value="Ribosomal_S18"/>
    <property type="match status" value="1"/>
</dbReference>
<dbReference type="PRINTS" id="PR00974">
    <property type="entry name" value="RIBOSOMALS18"/>
</dbReference>
<dbReference type="SUPFAM" id="SSF46911">
    <property type="entry name" value="Ribosomal protein S18"/>
    <property type="match status" value="1"/>
</dbReference>
<name>RS18_MALP2</name>
<feature type="chain" id="PRO_0000111187" description="Small ribosomal subunit protein bS18">
    <location>
        <begin position="1"/>
        <end position="154"/>
    </location>
</feature>
<feature type="region of interest" description="Disordered" evidence="2">
    <location>
        <begin position="1"/>
        <end position="82"/>
    </location>
</feature>
<feature type="compositionally biased region" description="Low complexity" evidence="2">
    <location>
        <begin position="8"/>
        <end position="19"/>
    </location>
</feature>
<feature type="compositionally biased region" description="Basic and acidic residues" evidence="2">
    <location>
        <begin position="20"/>
        <end position="32"/>
    </location>
</feature>
<feature type="compositionally biased region" description="Low complexity" evidence="2">
    <location>
        <begin position="33"/>
        <end position="49"/>
    </location>
</feature>
<feature type="compositionally biased region" description="Basic and acidic residues" evidence="2">
    <location>
        <begin position="50"/>
        <end position="69"/>
    </location>
</feature>
<reference key="1">
    <citation type="journal article" date="2002" name="Nucleic Acids Res.">
        <title>The complete genomic sequence of Mycoplasma penetrans, an intracellular bacterial pathogen in humans.</title>
        <authorList>
            <person name="Sasaki Y."/>
            <person name="Ishikawa J."/>
            <person name="Yamashita A."/>
            <person name="Oshima K."/>
            <person name="Kenri T."/>
            <person name="Furuya K."/>
            <person name="Yoshino C."/>
            <person name="Horino A."/>
            <person name="Shiba T."/>
            <person name="Sasaki T."/>
            <person name="Hattori M."/>
        </authorList>
    </citation>
    <scope>NUCLEOTIDE SEQUENCE [LARGE SCALE GENOMIC DNA]</scope>
    <source>
        <strain>HF-2</strain>
    </source>
</reference>